<evidence type="ECO:0000255" key="1">
    <source>
        <dbReference type="HAMAP-Rule" id="MF_00110"/>
    </source>
</evidence>
<accession>A1KS84</accession>
<dbReference type="EC" id="4.2.3.4" evidence="1"/>
<dbReference type="EMBL" id="AM421808">
    <property type="protein sequence ID" value="CAM09714.1"/>
    <property type="molecule type" value="Genomic_DNA"/>
</dbReference>
<dbReference type="RefSeq" id="WP_002221481.1">
    <property type="nucleotide sequence ID" value="NC_008767.1"/>
</dbReference>
<dbReference type="SMR" id="A1KS84"/>
<dbReference type="KEGG" id="nmc:NMC0406"/>
<dbReference type="HOGENOM" id="CLU_001201_0_2_4"/>
<dbReference type="UniPathway" id="UPA00053">
    <property type="reaction ID" value="UER00085"/>
</dbReference>
<dbReference type="Proteomes" id="UP000002286">
    <property type="component" value="Chromosome"/>
</dbReference>
<dbReference type="GO" id="GO:0005737">
    <property type="term" value="C:cytoplasm"/>
    <property type="evidence" value="ECO:0007669"/>
    <property type="project" value="UniProtKB-SubCell"/>
</dbReference>
<dbReference type="GO" id="GO:0003856">
    <property type="term" value="F:3-dehydroquinate synthase activity"/>
    <property type="evidence" value="ECO:0007669"/>
    <property type="project" value="UniProtKB-UniRule"/>
</dbReference>
<dbReference type="GO" id="GO:0046872">
    <property type="term" value="F:metal ion binding"/>
    <property type="evidence" value="ECO:0007669"/>
    <property type="project" value="UniProtKB-KW"/>
</dbReference>
<dbReference type="GO" id="GO:0000166">
    <property type="term" value="F:nucleotide binding"/>
    <property type="evidence" value="ECO:0007669"/>
    <property type="project" value="UniProtKB-KW"/>
</dbReference>
<dbReference type="GO" id="GO:0008652">
    <property type="term" value="P:amino acid biosynthetic process"/>
    <property type="evidence" value="ECO:0007669"/>
    <property type="project" value="UniProtKB-KW"/>
</dbReference>
<dbReference type="GO" id="GO:0009073">
    <property type="term" value="P:aromatic amino acid family biosynthetic process"/>
    <property type="evidence" value="ECO:0007669"/>
    <property type="project" value="UniProtKB-KW"/>
</dbReference>
<dbReference type="GO" id="GO:0009423">
    <property type="term" value="P:chorismate biosynthetic process"/>
    <property type="evidence" value="ECO:0007669"/>
    <property type="project" value="UniProtKB-UniRule"/>
</dbReference>
<dbReference type="CDD" id="cd08195">
    <property type="entry name" value="DHQS"/>
    <property type="match status" value="1"/>
</dbReference>
<dbReference type="FunFam" id="1.20.1090.10:FF:000002">
    <property type="entry name" value="3-dehydroquinate synthase"/>
    <property type="match status" value="1"/>
</dbReference>
<dbReference type="FunFam" id="3.40.50.1970:FF:000001">
    <property type="entry name" value="3-dehydroquinate synthase"/>
    <property type="match status" value="1"/>
</dbReference>
<dbReference type="Gene3D" id="3.40.50.1970">
    <property type="match status" value="1"/>
</dbReference>
<dbReference type="Gene3D" id="1.20.1090.10">
    <property type="entry name" value="Dehydroquinate synthase-like - alpha domain"/>
    <property type="match status" value="1"/>
</dbReference>
<dbReference type="HAMAP" id="MF_00110">
    <property type="entry name" value="DHQ_synthase"/>
    <property type="match status" value="1"/>
</dbReference>
<dbReference type="InterPro" id="IPR050071">
    <property type="entry name" value="Dehydroquinate_synthase"/>
</dbReference>
<dbReference type="InterPro" id="IPR016037">
    <property type="entry name" value="DHQ_synth_AroB"/>
</dbReference>
<dbReference type="InterPro" id="IPR030963">
    <property type="entry name" value="DHQ_synth_fam"/>
</dbReference>
<dbReference type="InterPro" id="IPR030960">
    <property type="entry name" value="DHQS/DOIS_N"/>
</dbReference>
<dbReference type="InterPro" id="IPR056179">
    <property type="entry name" value="DHQS_C"/>
</dbReference>
<dbReference type="NCBIfam" id="TIGR01357">
    <property type="entry name" value="aroB"/>
    <property type="match status" value="1"/>
</dbReference>
<dbReference type="PANTHER" id="PTHR43622">
    <property type="entry name" value="3-DEHYDROQUINATE SYNTHASE"/>
    <property type="match status" value="1"/>
</dbReference>
<dbReference type="PANTHER" id="PTHR43622:SF7">
    <property type="entry name" value="3-DEHYDROQUINATE SYNTHASE, CHLOROPLASTIC"/>
    <property type="match status" value="1"/>
</dbReference>
<dbReference type="Pfam" id="PF01761">
    <property type="entry name" value="DHQ_synthase"/>
    <property type="match status" value="1"/>
</dbReference>
<dbReference type="Pfam" id="PF24621">
    <property type="entry name" value="DHQS_C"/>
    <property type="match status" value="1"/>
</dbReference>
<dbReference type="PIRSF" id="PIRSF001455">
    <property type="entry name" value="DHQ_synth"/>
    <property type="match status" value="1"/>
</dbReference>
<dbReference type="SUPFAM" id="SSF56796">
    <property type="entry name" value="Dehydroquinate synthase-like"/>
    <property type="match status" value="1"/>
</dbReference>
<name>AROB_NEIMF</name>
<gene>
    <name evidence="1" type="primary">aroB</name>
    <name type="ordered locus">NMC0406</name>
</gene>
<proteinExistence type="inferred from homology"/>
<reference key="1">
    <citation type="journal article" date="2007" name="PLoS Genet.">
        <title>Meningococcal genetic variation mechanisms viewed through comparative analysis of serogroup C strain FAM18.</title>
        <authorList>
            <person name="Bentley S.D."/>
            <person name="Vernikos G.S."/>
            <person name="Snyder L.A.S."/>
            <person name="Churcher C."/>
            <person name="Arrowsmith C."/>
            <person name="Chillingworth T."/>
            <person name="Cronin A."/>
            <person name="Davis P.H."/>
            <person name="Holroyd N.E."/>
            <person name="Jagels K."/>
            <person name="Maddison M."/>
            <person name="Moule S."/>
            <person name="Rabbinowitsch E."/>
            <person name="Sharp S."/>
            <person name="Unwin L."/>
            <person name="Whitehead S."/>
            <person name="Quail M.A."/>
            <person name="Achtman M."/>
            <person name="Barrell B.G."/>
            <person name="Saunders N.J."/>
            <person name="Parkhill J."/>
        </authorList>
    </citation>
    <scope>NUCLEOTIDE SEQUENCE [LARGE SCALE GENOMIC DNA]</scope>
    <source>
        <strain>ATCC 700532 / DSM 15464 / FAM18</strain>
    </source>
</reference>
<feature type="chain" id="PRO_1000094552" description="3-dehydroquinate synthase">
    <location>
        <begin position="1"/>
        <end position="359"/>
    </location>
</feature>
<feature type="binding site" evidence="1">
    <location>
        <begin position="71"/>
        <end position="76"/>
    </location>
    <ligand>
        <name>NAD(+)</name>
        <dbReference type="ChEBI" id="CHEBI:57540"/>
    </ligand>
</feature>
<feature type="binding site" evidence="1">
    <location>
        <begin position="105"/>
        <end position="109"/>
    </location>
    <ligand>
        <name>NAD(+)</name>
        <dbReference type="ChEBI" id="CHEBI:57540"/>
    </ligand>
</feature>
<feature type="binding site" evidence="1">
    <location>
        <begin position="129"/>
        <end position="130"/>
    </location>
    <ligand>
        <name>NAD(+)</name>
        <dbReference type="ChEBI" id="CHEBI:57540"/>
    </ligand>
</feature>
<feature type="binding site" evidence="1">
    <location>
        <position position="142"/>
    </location>
    <ligand>
        <name>NAD(+)</name>
        <dbReference type="ChEBI" id="CHEBI:57540"/>
    </ligand>
</feature>
<feature type="binding site" evidence="1">
    <location>
        <position position="151"/>
    </location>
    <ligand>
        <name>NAD(+)</name>
        <dbReference type="ChEBI" id="CHEBI:57540"/>
    </ligand>
</feature>
<feature type="binding site" evidence="1">
    <location>
        <begin position="169"/>
        <end position="172"/>
    </location>
    <ligand>
        <name>NAD(+)</name>
        <dbReference type="ChEBI" id="CHEBI:57540"/>
    </ligand>
</feature>
<feature type="binding site" evidence="1">
    <location>
        <position position="184"/>
    </location>
    <ligand>
        <name>Zn(2+)</name>
        <dbReference type="ChEBI" id="CHEBI:29105"/>
    </ligand>
</feature>
<feature type="binding site" evidence="1">
    <location>
        <position position="247"/>
    </location>
    <ligand>
        <name>Zn(2+)</name>
        <dbReference type="ChEBI" id="CHEBI:29105"/>
    </ligand>
</feature>
<feature type="binding site" evidence="1">
    <location>
        <position position="264"/>
    </location>
    <ligand>
        <name>Zn(2+)</name>
        <dbReference type="ChEBI" id="CHEBI:29105"/>
    </ligand>
</feature>
<protein>
    <recommendedName>
        <fullName evidence="1">3-dehydroquinate synthase</fullName>
        <shortName evidence="1">DHQS</shortName>
        <ecNumber evidence="1">4.2.3.4</ecNumber>
    </recommendedName>
</protein>
<keyword id="KW-0028">Amino-acid biosynthesis</keyword>
<keyword id="KW-0057">Aromatic amino acid biosynthesis</keyword>
<keyword id="KW-0170">Cobalt</keyword>
<keyword id="KW-0963">Cytoplasm</keyword>
<keyword id="KW-0456">Lyase</keyword>
<keyword id="KW-0479">Metal-binding</keyword>
<keyword id="KW-0520">NAD</keyword>
<keyword id="KW-0547">Nucleotide-binding</keyword>
<keyword id="KW-0862">Zinc</keyword>
<comment type="function">
    <text evidence="1">Catalyzes the conversion of 3-deoxy-D-arabino-heptulosonate 7-phosphate (DAHP) to dehydroquinate (DHQ).</text>
</comment>
<comment type="catalytic activity">
    <reaction evidence="1">
        <text>7-phospho-2-dehydro-3-deoxy-D-arabino-heptonate = 3-dehydroquinate + phosphate</text>
        <dbReference type="Rhea" id="RHEA:21968"/>
        <dbReference type="ChEBI" id="CHEBI:32364"/>
        <dbReference type="ChEBI" id="CHEBI:43474"/>
        <dbReference type="ChEBI" id="CHEBI:58394"/>
        <dbReference type="EC" id="4.2.3.4"/>
    </reaction>
</comment>
<comment type="cofactor">
    <cofactor evidence="1">
        <name>Co(2+)</name>
        <dbReference type="ChEBI" id="CHEBI:48828"/>
    </cofactor>
    <cofactor evidence="1">
        <name>Zn(2+)</name>
        <dbReference type="ChEBI" id="CHEBI:29105"/>
    </cofactor>
    <text evidence="1">Binds 1 divalent metal cation per subunit. Can use either Co(2+) or Zn(2+).</text>
</comment>
<comment type="cofactor">
    <cofactor evidence="1">
        <name>NAD(+)</name>
        <dbReference type="ChEBI" id="CHEBI:57540"/>
    </cofactor>
</comment>
<comment type="pathway">
    <text evidence="1">Metabolic intermediate biosynthesis; chorismate biosynthesis; chorismate from D-erythrose 4-phosphate and phosphoenolpyruvate: step 2/7.</text>
</comment>
<comment type="subcellular location">
    <subcellularLocation>
        <location evidence="1">Cytoplasm</location>
    </subcellularLocation>
</comment>
<comment type="similarity">
    <text evidence="1">Belongs to the sugar phosphate cyclases superfamily. Dehydroquinate synthase family.</text>
</comment>
<organism>
    <name type="scientific">Neisseria meningitidis serogroup C / serotype 2a (strain ATCC 700532 / DSM 15464 / FAM18)</name>
    <dbReference type="NCBI Taxonomy" id="272831"/>
    <lineage>
        <taxon>Bacteria</taxon>
        <taxon>Pseudomonadati</taxon>
        <taxon>Pseudomonadota</taxon>
        <taxon>Betaproteobacteria</taxon>
        <taxon>Neisseriales</taxon>
        <taxon>Neisseriaceae</taxon>
        <taxon>Neisseria</taxon>
    </lineage>
</organism>
<sequence length="359" mass="38745">MKTLTVHTPSHSYPIFIGNGLLPQAGSLLKPHLGKRAAIIANETVAPLYLGTLQTALDAAGVSHFSIILPDGEAHKNWQTLNLIFDGLMQNRAERKTTLIALGGGVIGDMVGFAAATYQRGAPFVQIPTTLLSQVDSSVGGKTAINHPLGKNMIGAFYQPQAVLADLDTLHTLPARELSAGMAEVIKYGALGDIGFFEWLEQHMPELMTLDREKLAQAVYRCCQMKADIVAQDETEQGIRAWLNLGHTFGHAIETEMGYGTWLHGEAIAAGCVLAARLSEQLGKTSAADTARLAALLEAAGLPSAPPVFAFEKWLEHMSHDKKVSGGIMRFIGLNRLGEANITEITDTDILRRTLQPYL</sequence>